<sequence length="445" mass="47441">MSNRKYFGTDGIRGRVGNAPITPDFVLKLGWAAGKVLARHGSRKIIIGKDTRISGYMLESALEAGLAAAGLSASFTGPMPTPAVAYLTRTFRAEAGIVISASHNPFYDNGIKFFSIDGTKLPDDVEEAIEAEMEKEITCVDSAELGKASRIVDAAGRYIEFCKGTFPNELSLNGLKVVVDCANGATYHIAPNVLRELGATVIAIGCEPNGVNINEEVGATDVRALQARVLAEKADLGIALDGDGDRVIMVDHEGNKVDGDQIMYIIAREGLRQGQLRGGAVGTLMSNMGLELALKQLGIPFARAKVGDRYVLEKLQEKGWRIGAENSGHVILLDKTTTGDGIVAGLQVLAAMVRNHMSLHDLCSGMKMFPQILVNVRYTAGSGDPLENEAVKAVTADVEATLGNRGRVLLRKSGTEPLIRVMVEGEDEAQVTAFAHRIADAVKAV</sequence>
<proteinExistence type="inferred from homology"/>
<gene>
    <name evidence="1" type="primary">glmM</name>
    <name type="ordered locus">STM3294</name>
</gene>
<evidence type="ECO:0000255" key="1">
    <source>
        <dbReference type="HAMAP-Rule" id="MF_01554"/>
    </source>
</evidence>
<comment type="function">
    <text evidence="1">Catalyzes the conversion of glucosamine-6-phosphate to glucosamine-1-phosphate.</text>
</comment>
<comment type="catalytic activity">
    <reaction evidence="1">
        <text>alpha-D-glucosamine 1-phosphate = D-glucosamine 6-phosphate</text>
        <dbReference type="Rhea" id="RHEA:23424"/>
        <dbReference type="ChEBI" id="CHEBI:58516"/>
        <dbReference type="ChEBI" id="CHEBI:58725"/>
        <dbReference type="EC" id="5.4.2.10"/>
    </reaction>
</comment>
<comment type="cofactor">
    <cofactor evidence="1">
        <name>Mg(2+)</name>
        <dbReference type="ChEBI" id="CHEBI:18420"/>
    </cofactor>
    <text evidence="1">Binds 1 Mg(2+) ion per subunit.</text>
</comment>
<comment type="PTM">
    <text evidence="1">Activated by phosphorylation.</text>
</comment>
<comment type="similarity">
    <text evidence="1">Belongs to the phosphohexose mutase family.</text>
</comment>
<name>GLMM_SALTY</name>
<keyword id="KW-0413">Isomerase</keyword>
<keyword id="KW-0460">Magnesium</keyword>
<keyword id="KW-0479">Metal-binding</keyword>
<keyword id="KW-0597">Phosphoprotein</keyword>
<keyword id="KW-1185">Reference proteome</keyword>
<protein>
    <recommendedName>
        <fullName evidence="1">Phosphoglucosamine mutase</fullName>
        <ecNumber evidence="1">5.4.2.10</ecNumber>
    </recommendedName>
</protein>
<organism>
    <name type="scientific">Salmonella typhimurium (strain LT2 / SGSC1412 / ATCC 700720)</name>
    <dbReference type="NCBI Taxonomy" id="99287"/>
    <lineage>
        <taxon>Bacteria</taxon>
        <taxon>Pseudomonadati</taxon>
        <taxon>Pseudomonadota</taxon>
        <taxon>Gammaproteobacteria</taxon>
        <taxon>Enterobacterales</taxon>
        <taxon>Enterobacteriaceae</taxon>
        <taxon>Salmonella</taxon>
    </lineage>
</organism>
<dbReference type="EC" id="5.4.2.10" evidence="1"/>
<dbReference type="EMBL" id="AE006468">
    <property type="protein sequence ID" value="AAL22164.1"/>
    <property type="molecule type" value="Genomic_DNA"/>
</dbReference>
<dbReference type="RefSeq" id="WP_000071169.1">
    <property type="nucleotide sequence ID" value="NC_003197.2"/>
</dbReference>
<dbReference type="SMR" id="Q7CPP9"/>
<dbReference type="STRING" id="99287.STM3294"/>
<dbReference type="PaxDb" id="99287-STM3294"/>
<dbReference type="KEGG" id="stm:STM3294"/>
<dbReference type="PATRIC" id="fig|99287.12.peg.3491"/>
<dbReference type="HOGENOM" id="CLU_016950_7_0_6"/>
<dbReference type="OMA" id="SHNAMPD"/>
<dbReference type="PhylomeDB" id="Q7CPP9"/>
<dbReference type="BioCyc" id="SENT99287:STM3294-MONOMER"/>
<dbReference type="Proteomes" id="UP000001014">
    <property type="component" value="Chromosome"/>
</dbReference>
<dbReference type="GO" id="GO:0005829">
    <property type="term" value="C:cytosol"/>
    <property type="evidence" value="ECO:0000318"/>
    <property type="project" value="GO_Central"/>
</dbReference>
<dbReference type="GO" id="GO:0000287">
    <property type="term" value="F:magnesium ion binding"/>
    <property type="evidence" value="ECO:0007669"/>
    <property type="project" value="UniProtKB-UniRule"/>
</dbReference>
<dbReference type="GO" id="GO:0008966">
    <property type="term" value="F:phosphoglucosamine mutase activity"/>
    <property type="evidence" value="ECO:0000318"/>
    <property type="project" value="GO_Central"/>
</dbReference>
<dbReference type="GO" id="GO:0004615">
    <property type="term" value="F:phosphomannomutase activity"/>
    <property type="evidence" value="ECO:0000318"/>
    <property type="project" value="GO_Central"/>
</dbReference>
<dbReference type="GO" id="GO:0005975">
    <property type="term" value="P:carbohydrate metabolic process"/>
    <property type="evidence" value="ECO:0007669"/>
    <property type="project" value="InterPro"/>
</dbReference>
<dbReference type="GO" id="GO:0009252">
    <property type="term" value="P:peptidoglycan biosynthetic process"/>
    <property type="evidence" value="ECO:0000318"/>
    <property type="project" value="GO_Central"/>
</dbReference>
<dbReference type="GO" id="GO:0006048">
    <property type="term" value="P:UDP-N-acetylglucosamine biosynthetic process"/>
    <property type="evidence" value="ECO:0000318"/>
    <property type="project" value="GO_Central"/>
</dbReference>
<dbReference type="CDD" id="cd05802">
    <property type="entry name" value="GlmM"/>
    <property type="match status" value="1"/>
</dbReference>
<dbReference type="FunFam" id="3.30.310.50:FF:000001">
    <property type="entry name" value="Phosphoglucosamine mutase"/>
    <property type="match status" value="1"/>
</dbReference>
<dbReference type="FunFam" id="3.40.120.10:FF:000001">
    <property type="entry name" value="Phosphoglucosamine mutase"/>
    <property type="match status" value="1"/>
</dbReference>
<dbReference type="FunFam" id="3.40.120.10:FF:000002">
    <property type="entry name" value="Phosphoglucosamine mutase"/>
    <property type="match status" value="1"/>
</dbReference>
<dbReference type="Gene3D" id="3.40.120.10">
    <property type="entry name" value="Alpha-D-Glucose-1,6-Bisphosphate, subunit A, domain 3"/>
    <property type="match status" value="3"/>
</dbReference>
<dbReference type="Gene3D" id="3.30.310.50">
    <property type="entry name" value="Alpha-D-phosphohexomutase, C-terminal domain"/>
    <property type="match status" value="1"/>
</dbReference>
<dbReference type="HAMAP" id="MF_01554_B">
    <property type="entry name" value="GlmM_B"/>
    <property type="match status" value="1"/>
</dbReference>
<dbReference type="InterPro" id="IPR005844">
    <property type="entry name" value="A-D-PHexomutase_a/b/a-I"/>
</dbReference>
<dbReference type="InterPro" id="IPR016055">
    <property type="entry name" value="A-D-PHexomutase_a/b/a-I/II/III"/>
</dbReference>
<dbReference type="InterPro" id="IPR005845">
    <property type="entry name" value="A-D-PHexomutase_a/b/a-II"/>
</dbReference>
<dbReference type="InterPro" id="IPR005846">
    <property type="entry name" value="A-D-PHexomutase_a/b/a-III"/>
</dbReference>
<dbReference type="InterPro" id="IPR005843">
    <property type="entry name" value="A-D-PHexomutase_C"/>
</dbReference>
<dbReference type="InterPro" id="IPR036900">
    <property type="entry name" value="A-D-PHexomutase_C_sf"/>
</dbReference>
<dbReference type="InterPro" id="IPR016066">
    <property type="entry name" value="A-D-PHexomutase_CS"/>
</dbReference>
<dbReference type="InterPro" id="IPR005841">
    <property type="entry name" value="Alpha-D-phosphohexomutase_SF"/>
</dbReference>
<dbReference type="InterPro" id="IPR006352">
    <property type="entry name" value="GlmM_bact"/>
</dbReference>
<dbReference type="InterPro" id="IPR050060">
    <property type="entry name" value="Phosphoglucosamine_mutase"/>
</dbReference>
<dbReference type="NCBIfam" id="TIGR01455">
    <property type="entry name" value="glmM"/>
    <property type="match status" value="1"/>
</dbReference>
<dbReference type="NCBIfam" id="NF008139">
    <property type="entry name" value="PRK10887.1"/>
    <property type="match status" value="1"/>
</dbReference>
<dbReference type="PANTHER" id="PTHR42946:SF1">
    <property type="entry name" value="PHOSPHOGLUCOMUTASE (ALPHA-D-GLUCOSE-1,6-BISPHOSPHATE-DEPENDENT)"/>
    <property type="match status" value="1"/>
</dbReference>
<dbReference type="PANTHER" id="PTHR42946">
    <property type="entry name" value="PHOSPHOHEXOSE MUTASE"/>
    <property type="match status" value="1"/>
</dbReference>
<dbReference type="Pfam" id="PF02878">
    <property type="entry name" value="PGM_PMM_I"/>
    <property type="match status" value="1"/>
</dbReference>
<dbReference type="Pfam" id="PF02879">
    <property type="entry name" value="PGM_PMM_II"/>
    <property type="match status" value="1"/>
</dbReference>
<dbReference type="Pfam" id="PF02880">
    <property type="entry name" value="PGM_PMM_III"/>
    <property type="match status" value="1"/>
</dbReference>
<dbReference type="Pfam" id="PF00408">
    <property type="entry name" value="PGM_PMM_IV"/>
    <property type="match status" value="1"/>
</dbReference>
<dbReference type="PRINTS" id="PR00509">
    <property type="entry name" value="PGMPMM"/>
</dbReference>
<dbReference type="SUPFAM" id="SSF55957">
    <property type="entry name" value="Phosphoglucomutase, C-terminal domain"/>
    <property type="match status" value="1"/>
</dbReference>
<dbReference type="SUPFAM" id="SSF53738">
    <property type="entry name" value="Phosphoglucomutase, first 3 domains"/>
    <property type="match status" value="3"/>
</dbReference>
<dbReference type="PROSITE" id="PS00710">
    <property type="entry name" value="PGM_PMM"/>
    <property type="match status" value="1"/>
</dbReference>
<reference key="1">
    <citation type="journal article" date="2001" name="Nature">
        <title>Complete genome sequence of Salmonella enterica serovar Typhimurium LT2.</title>
        <authorList>
            <person name="McClelland M."/>
            <person name="Sanderson K.E."/>
            <person name="Spieth J."/>
            <person name="Clifton S.W."/>
            <person name="Latreille P."/>
            <person name="Courtney L."/>
            <person name="Porwollik S."/>
            <person name="Ali J."/>
            <person name="Dante M."/>
            <person name="Du F."/>
            <person name="Hou S."/>
            <person name="Layman D."/>
            <person name="Leonard S."/>
            <person name="Nguyen C."/>
            <person name="Scott K."/>
            <person name="Holmes A."/>
            <person name="Grewal N."/>
            <person name="Mulvaney E."/>
            <person name="Ryan E."/>
            <person name="Sun H."/>
            <person name="Florea L."/>
            <person name="Miller W."/>
            <person name="Stoneking T."/>
            <person name="Nhan M."/>
            <person name="Waterston R."/>
            <person name="Wilson R.K."/>
        </authorList>
    </citation>
    <scope>NUCLEOTIDE SEQUENCE [LARGE SCALE GENOMIC DNA]</scope>
    <source>
        <strain>LT2 / SGSC1412 / ATCC 700720</strain>
    </source>
</reference>
<feature type="chain" id="PRO_0000147953" description="Phosphoglucosamine mutase">
    <location>
        <begin position="1"/>
        <end position="445"/>
    </location>
</feature>
<feature type="active site" description="Phosphoserine intermediate" evidence="1">
    <location>
        <position position="102"/>
    </location>
</feature>
<feature type="binding site" description="via phosphate group" evidence="1">
    <location>
        <position position="102"/>
    </location>
    <ligand>
        <name>Mg(2+)</name>
        <dbReference type="ChEBI" id="CHEBI:18420"/>
    </ligand>
</feature>
<feature type="binding site" evidence="1">
    <location>
        <position position="241"/>
    </location>
    <ligand>
        <name>Mg(2+)</name>
        <dbReference type="ChEBI" id="CHEBI:18420"/>
    </ligand>
</feature>
<feature type="binding site" evidence="1">
    <location>
        <position position="243"/>
    </location>
    <ligand>
        <name>Mg(2+)</name>
        <dbReference type="ChEBI" id="CHEBI:18420"/>
    </ligand>
</feature>
<feature type="binding site" evidence="1">
    <location>
        <position position="245"/>
    </location>
    <ligand>
        <name>Mg(2+)</name>
        <dbReference type="ChEBI" id="CHEBI:18420"/>
    </ligand>
</feature>
<feature type="modified residue" description="Phosphoserine" evidence="1">
    <location>
        <position position="102"/>
    </location>
</feature>
<accession>Q7CPP9</accession>